<organism>
    <name type="scientific">Paraburkholderia xenovorans (strain LB400)</name>
    <dbReference type="NCBI Taxonomy" id="266265"/>
    <lineage>
        <taxon>Bacteria</taxon>
        <taxon>Pseudomonadati</taxon>
        <taxon>Pseudomonadota</taxon>
        <taxon>Betaproteobacteria</taxon>
        <taxon>Burkholderiales</taxon>
        <taxon>Burkholderiaceae</taxon>
        <taxon>Paraburkholderia</taxon>
    </lineage>
</organism>
<feature type="chain" id="PRO_1000023167" description="Thymidylate kinase">
    <location>
        <begin position="1"/>
        <end position="206"/>
    </location>
</feature>
<feature type="binding site" evidence="1">
    <location>
        <begin position="11"/>
        <end position="18"/>
    </location>
    <ligand>
        <name>ATP</name>
        <dbReference type="ChEBI" id="CHEBI:30616"/>
    </ligand>
</feature>
<comment type="function">
    <text evidence="1">Phosphorylation of dTMP to form dTDP in both de novo and salvage pathways of dTTP synthesis.</text>
</comment>
<comment type="catalytic activity">
    <reaction evidence="1">
        <text>dTMP + ATP = dTDP + ADP</text>
        <dbReference type="Rhea" id="RHEA:13517"/>
        <dbReference type="ChEBI" id="CHEBI:30616"/>
        <dbReference type="ChEBI" id="CHEBI:58369"/>
        <dbReference type="ChEBI" id="CHEBI:63528"/>
        <dbReference type="ChEBI" id="CHEBI:456216"/>
        <dbReference type="EC" id="2.7.4.9"/>
    </reaction>
</comment>
<comment type="similarity">
    <text evidence="1">Belongs to the thymidylate kinase family.</text>
</comment>
<gene>
    <name evidence="1" type="primary">tmk</name>
    <name type="ordered locus">Bxeno_A2168</name>
    <name type="ORF">Bxe_A2263</name>
</gene>
<name>KTHY_PARXL</name>
<proteinExistence type="inferred from homology"/>
<reference key="1">
    <citation type="journal article" date="2006" name="Proc. Natl. Acad. Sci. U.S.A.">
        <title>Burkholderia xenovorans LB400 harbors a multi-replicon, 9.73-Mbp genome shaped for versatility.</title>
        <authorList>
            <person name="Chain P.S.G."/>
            <person name="Denef V.J."/>
            <person name="Konstantinidis K.T."/>
            <person name="Vergez L.M."/>
            <person name="Agullo L."/>
            <person name="Reyes V.L."/>
            <person name="Hauser L."/>
            <person name="Cordova M."/>
            <person name="Gomez L."/>
            <person name="Gonzalez M."/>
            <person name="Land M."/>
            <person name="Lao V."/>
            <person name="Larimer F."/>
            <person name="LiPuma J.J."/>
            <person name="Mahenthiralingam E."/>
            <person name="Malfatti S.A."/>
            <person name="Marx C.J."/>
            <person name="Parnell J.J."/>
            <person name="Ramette A."/>
            <person name="Richardson P."/>
            <person name="Seeger M."/>
            <person name="Smith D."/>
            <person name="Spilker T."/>
            <person name="Sul W.J."/>
            <person name="Tsoi T.V."/>
            <person name="Ulrich L.E."/>
            <person name="Zhulin I.B."/>
            <person name="Tiedje J.M."/>
        </authorList>
    </citation>
    <scope>NUCLEOTIDE SEQUENCE [LARGE SCALE GENOMIC DNA]</scope>
    <source>
        <strain>LB400</strain>
    </source>
</reference>
<protein>
    <recommendedName>
        <fullName evidence="1">Thymidylate kinase</fullName>
        <ecNumber evidence="1">2.7.4.9</ecNumber>
    </recommendedName>
    <alternativeName>
        <fullName evidence="1">dTMP kinase</fullName>
    </alternativeName>
</protein>
<sequence length="206" mass="23471">MARGKFITFEGIDGAGKTTHLSWFRERLEQKVASTGRSVVMTREPGGTPLGEQIREIVLHQKMDLETEALLMFALRRQHLAEVIEPALARGDWVLSDRFTDATFAYQGGGRGLPRDKLETLERWVQGGFQPDLTVLFDLDPEVASERRSAARDPDRFESESEAFFSRTRAEYLRRAEEAPYRFAIIDSAQSIAQIQRRLEELIAIL</sequence>
<dbReference type="EC" id="2.7.4.9" evidence="1"/>
<dbReference type="EMBL" id="CP000270">
    <property type="protein sequence ID" value="ABE30706.1"/>
    <property type="molecule type" value="Genomic_DNA"/>
</dbReference>
<dbReference type="RefSeq" id="WP_011488329.1">
    <property type="nucleotide sequence ID" value="NC_007951.1"/>
</dbReference>
<dbReference type="SMR" id="Q13YY3"/>
<dbReference type="STRING" id="266265.Bxe_A2263"/>
<dbReference type="KEGG" id="bxb:DR64_4412"/>
<dbReference type="KEGG" id="bxe:Bxe_A2263"/>
<dbReference type="PATRIC" id="fig|266265.5.peg.2272"/>
<dbReference type="eggNOG" id="COG0125">
    <property type="taxonomic scope" value="Bacteria"/>
</dbReference>
<dbReference type="OrthoDB" id="9774907at2"/>
<dbReference type="Proteomes" id="UP000001817">
    <property type="component" value="Chromosome 1"/>
</dbReference>
<dbReference type="GO" id="GO:0005829">
    <property type="term" value="C:cytosol"/>
    <property type="evidence" value="ECO:0007669"/>
    <property type="project" value="TreeGrafter"/>
</dbReference>
<dbReference type="GO" id="GO:0005524">
    <property type="term" value="F:ATP binding"/>
    <property type="evidence" value="ECO:0007669"/>
    <property type="project" value="UniProtKB-UniRule"/>
</dbReference>
<dbReference type="GO" id="GO:0004798">
    <property type="term" value="F:dTMP kinase activity"/>
    <property type="evidence" value="ECO:0007669"/>
    <property type="project" value="UniProtKB-UniRule"/>
</dbReference>
<dbReference type="GO" id="GO:0006233">
    <property type="term" value="P:dTDP biosynthetic process"/>
    <property type="evidence" value="ECO:0007669"/>
    <property type="project" value="InterPro"/>
</dbReference>
<dbReference type="GO" id="GO:0006235">
    <property type="term" value="P:dTTP biosynthetic process"/>
    <property type="evidence" value="ECO:0007669"/>
    <property type="project" value="UniProtKB-UniRule"/>
</dbReference>
<dbReference type="GO" id="GO:0006227">
    <property type="term" value="P:dUDP biosynthetic process"/>
    <property type="evidence" value="ECO:0007669"/>
    <property type="project" value="TreeGrafter"/>
</dbReference>
<dbReference type="CDD" id="cd01672">
    <property type="entry name" value="TMPK"/>
    <property type="match status" value="1"/>
</dbReference>
<dbReference type="FunFam" id="3.40.50.300:FF:000225">
    <property type="entry name" value="Thymidylate kinase"/>
    <property type="match status" value="1"/>
</dbReference>
<dbReference type="Gene3D" id="3.40.50.300">
    <property type="entry name" value="P-loop containing nucleotide triphosphate hydrolases"/>
    <property type="match status" value="1"/>
</dbReference>
<dbReference type="HAMAP" id="MF_00165">
    <property type="entry name" value="Thymidylate_kinase"/>
    <property type="match status" value="1"/>
</dbReference>
<dbReference type="InterPro" id="IPR027417">
    <property type="entry name" value="P-loop_NTPase"/>
</dbReference>
<dbReference type="InterPro" id="IPR039430">
    <property type="entry name" value="Thymidylate_kin-like_dom"/>
</dbReference>
<dbReference type="InterPro" id="IPR018094">
    <property type="entry name" value="Thymidylate_kinase"/>
</dbReference>
<dbReference type="NCBIfam" id="TIGR00041">
    <property type="entry name" value="DTMP_kinase"/>
    <property type="match status" value="1"/>
</dbReference>
<dbReference type="PANTHER" id="PTHR10344">
    <property type="entry name" value="THYMIDYLATE KINASE"/>
    <property type="match status" value="1"/>
</dbReference>
<dbReference type="PANTHER" id="PTHR10344:SF4">
    <property type="entry name" value="UMP-CMP KINASE 2, MITOCHONDRIAL"/>
    <property type="match status" value="1"/>
</dbReference>
<dbReference type="Pfam" id="PF02223">
    <property type="entry name" value="Thymidylate_kin"/>
    <property type="match status" value="1"/>
</dbReference>
<dbReference type="SUPFAM" id="SSF52540">
    <property type="entry name" value="P-loop containing nucleoside triphosphate hydrolases"/>
    <property type="match status" value="1"/>
</dbReference>
<accession>Q13YY3</accession>
<evidence type="ECO:0000255" key="1">
    <source>
        <dbReference type="HAMAP-Rule" id="MF_00165"/>
    </source>
</evidence>
<keyword id="KW-0067">ATP-binding</keyword>
<keyword id="KW-0418">Kinase</keyword>
<keyword id="KW-0545">Nucleotide biosynthesis</keyword>
<keyword id="KW-0547">Nucleotide-binding</keyword>
<keyword id="KW-1185">Reference proteome</keyword>
<keyword id="KW-0808">Transferase</keyword>